<reference key="1">
    <citation type="journal article" date="2009" name="PLoS Genet.">
        <title>Organised genome dynamics in the Escherichia coli species results in highly diverse adaptive paths.</title>
        <authorList>
            <person name="Touchon M."/>
            <person name="Hoede C."/>
            <person name="Tenaillon O."/>
            <person name="Barbe V."/>
            <person name="Baeriswyl S."/>
            <person name="Bidet P."/>
            <person name="Bingen E."/>
            <person name="Bonacorsi S."/>
            <person name="Bouchier C."/>
            <person name="Bouvet O."/>
            <person name="Calteau A."/>
            <person name="Chiapello H."/>
            <person name="Clermont O."/>
            <person name="Cruveiller S."/>
            <person name="Danchin A."/>
            <person name="Diard M."/>
            <person name="Dossat C."/>
            <person name="Karoui M.E."/>
            <person name="Frapy E."/>
            <person name="Garry L."/>
            <person name="Ghigo J.M."/>
            <person name="Gilles A.M."/>
            <person name="Johnson J."/>
            <person name="Le Bouguenec C."/>
            <person name="Lescat M."/>
            <person name="Mangenot S."/>
            <person name="Martinez-Jehanne V."/>
            <person name="Matic I."/>
            <person name="Nassif X."/>
            <person name="Oztas S."/>
            <person name="Petit M.A."/>
            <person name="Pichon C."/>
            <person name="Rouy Z."/>
            <person name="Ruf C.S."/>
            <person name="Schneider D."/>
            <person name="Tourret J."/>
            <person name="Vacherie B."/>
            <person name="Vallenet D."/>
            <person name="Medigue C."/>
            <person name="Rocha E.P.C."/>
            <person name="Denamur E."/>
        </authorList>
    </citation>
    <scope>NUCLEOTIDE SEQUENCE [LARGE SCALE GENOMIC DNA]</scope>
    <source>
        <strain>ED1a</strain>
    </source>
</reference>
<evidence type="ECO:0000255" key="1">
    <source>
        <dbReference type="HAMAP-Rule" id="MF_00185"/>
    </source>
</evidence>
<dbReference type="EC" id="2.5.1.75" evidence="1"/>
<dbReference type="EMBL" id="CU928162">
    <property type="protein sequence ID" value="CAR11059.2"/>
    <property type="molecule type" value="Genomic_DNA"/>
</dbReference>
<dbReference type="RefSeq" id="WP_001280357.1">
    <property type="nucleotide sequence ID" value="NC_011745.1"/>
</dbReference>
<dbReference type="SMR" id="B7MSY4"/>
<dbReference type="KEGG" id="ecq:ECED1_4956"/>
<dbReference type="HOGENOM" id="CLU_032616_0_0_6"/>
<dbReference type="Proteomes" id="UP000000748">
    <property type="component" value="Chromosome"/>
</dbReference>
<dbReference type="GO" id="GO:0005524">
    <property type="term" value="F:ATP binding"/>
    <property type="evidence" value="ECO:0007669"/>
    <property type="project" value="UniProtKB-UniRule"/>
</dbReference>
<dbReference type="GO" id="GO:0052381">
    <property type="term" value="F:tRNA dimethylallyltransferase activity"/>
    <property type="evidence" value="ECO:0007669"/>
    <property type="project" value="UniProtKB-UniRule"/>
</dbReference>
<dbReference type="GO" id="GO:0006400">
    <property type="term" value="P:tRNA modification"/>
    <property type="evidence" value="ECO:0007669"/>
    <property type="project" value="TreeGrafter"/>
</dbReference>
<dbReference type="FunFam" id="1.10.20.140:FF:000001">
    <property type="entry name" value="tRNA dimethylallyltransferase"/>
    <property type="match status" value="1"/>
</dbReference>
<dbReference type="FunFam" id="1.10.287.890:FF:000001">
    <property type="entry name" value="tRNA dimethylallyltransferase"/>
    <property type="match status" value="1"/>
</dbReference>
<dbReference type="Gene3D" id="1.10.20.140">
    <property type="match status" value="1"/>
</dbReference>
<dbReference type="Gene3D" id="1.10.287.890">
    <property type="entry name" value="Crystal structure of tRNA isopentenylpyrophosphate transferase (bh2366) domain"/>
    <property type="match status" value="1"/>
</dbReference>
<dbReference type="Gene3D" id="3.40.50.300">
    <property type="entry name" value="P-loop containing nucleotide triphosphate hydrolases"/>
    <property type="match status" value="1"/>
</dbReference>
<dbReference type="HAMAP" id="MF_00185">
    <property type="entry name" value="IPP_trans"/>
    <property type="match status" value="1"/>
</dbReference>
<dbReference type="InterPro" id="IPR039657">
    <property type="entry name" value="Dimethylallyltransferase"/>
</dbReference>
<dbReference type="InterPro" id="IPR018022">
    <property type="entry name" value="IPT"/>
</dbReference>
<dbReference type="InterPro" id="IPR027417">
    <property type="entry name" value="P-loop_NTPase"/>
</dbReference>
<dbReference type="NCBIfam" id="TIGR00174">
    <property type="entry name" value="miaA"/>
    <property type="match status" value="1"/>
</dbReference>
<dbReference type="PANTHER" id="PTHR11088">
    <property type="entry name" value="TRNA DIMETHYLALLYLTRANSFERASE"/>
    <property type="match status" value="1"/>
</dbReference>
<dbReference type="PANTHER" id="PTHR11088:SF60">
    <property type="entry name" value="TRNA DIMETHYLALLYLTRANSFERASE"/>
    <property type="match status" value="1"/>
</dbReference>
<dbReference type="Pfam" id="PF01715">
    <property type="entry name" value="IPPT"/>
    <property type="match status" value="1"/>
</dbReference>
<dbReference type="SUPFAM" id="SSF52540">
    <property type="entry name" value="P-loop containing nucleoside triphosphate hydrolases"/>
    <property type="match status" value="1"/>
</dbReference>
<organism>
    <name type="scientific">Escherichia coli O81 (strain ED1a)</name>
    <dbReference type="NCBI Taxonomy" id="585397"/>
    <lineage>
        <taxon>Bacteria</taxon>
        <taxon>Pseudomonadati</taxon>
        <taxon>Pseudomonadota</taxon>
        <taxon>Gammaproteobacteria</taxon>
        <taxon>Enterobacterales</taxon>
        <taxon>Enterobacteriaceae</taxon>
        <taxon>Escherichia</taxon>
    </lineage>
</organism>
<protein>
    <recommendedName>
        <fullName evidence="1">tRNA dimethylallyltransferase</fullName>
        <ecNumber evidence="1">2.5.1.75</ecNumber>
    </recommendedName>
    <alternativeName>
        <fullName evidence="1">Dimethylallyl diphosphate:tRNA dimethylallyltransferase</fullName>
        <shortName evidence="1">DMAPP:tRNA dimethylallyltransferase</shortName>
        <shortName evidence="1">DMATase</shortName>
    </alternativeName>
    <alternativeName>
        <fullName evidence="1">Isopentenyl-diphosphate:tRNA isopentenyltransferase</fullName>
        <shortName evidence="1">IPP transferase</shortName>
        <shortName evidence="1">IPPT</shortName>
        <shortName evidence="1">IPTase</shortName>
    </alternativeName>
</protein>
<sequence>MSDISKASLPKAIFLMGPTASGKTALAIELRKILPVELISVDSALIYKGMDIGTAKPNAEELLAAPHRLLNIRDPSQAYSAADFRRDALAEMADITAAGRIPLLVGGTMLYFKALLEGLSPLPSADPEVRARIEQQAAEQGWESLHRQLQEIDPVAAARIHPNDPQRLSRALEVFFISGKTLTELTQTSGDALPYQVHQFAIAPASRELLHQRIEQRFHQMLASGFEAEVRALFARGDLHTDLPSIRCVGYRQMWSYLEGEISYDEMVYRGVCATRQLAKRQITWLRGWEGVHWLDSEKPEQARDEVLQVVGAIAG</sequence>
<keyword id="KW-0067">ATP-binding</keyword>
<keyword id="KW-0460">Magnesium</keyword>
<keyword id="KW-0547">Nucleotide-binding</keyword>
<keyword id="KW-0808">Transferase</keyword>
<keyword id="KW-0819">tRNA processing</keyword>
<feature type="chain" id="PRO_0000377159" description="tRNA dimethylallyltransferase">
    <location>
        <begin position="1"/>
        <end position="316"/>
    </location>
</feature>
<feature type="region of interest" description="Interaction with substrate tRNA" evidence="1">
    <location>
        <begin position="42"/>
        <end position="45"/>
    </location>
</feature>
<feature type="region of interest" description="Interaction with substrate tRNA" evidence="1">
    <location>
        <begin position="166"/>
        <end position="170"/>
    </location>
</feature>
<feature type="region of interest" description="Interaction with substrate tRNA" evidence="1">
    <location>
        <begin position="247"/>
        <end position="252"/>
    </location>
</feature>
<feature type="region of interest" description="Interaction with substrate tRNA" evidence="1">
    <location>
        <begin position="280"/>
        <end position="287"/>
    </location>
</feature>
<feature type="binding site" evidence="1">
    <location>
        <begin position="17"/>
        <end position="24"/>
    </location>
    <ligand>
        <name>ATP</name>
        <dbReference type="ChEBI" id="CHEBI:30616"/>
    </ligand>
</feature>
<feature type="binding site" evidence="1">
    <location>
        <begin position="19"/>
        <end position="24"/>
    </location>
    <ligand>
        <name>substrate</name>
    </ligand>
</feature>
<feature type="site" description="Interaction with substrate tRNA" evidence="1">
    <location>
        <position position="108"/>
    </location>
</feature>
<feature type="site" description="Interaction with substrate tRNA" evidence="1">
    <location>
        <position position="130"/>
    </location>
</feature>
<accession>B7MSY4</accession>
<gene>
    <name evidence="1" type="primary">miaA</name>
    <name type="ordered locus">ECED1_4956</name>
</gene>
<name>MIAA_ECO81</name>
<proteinExistence type="inferred from homology"/>
<comment type="function">
    <text evidence="1">Catalyzes the transfer of a dimethylallyl group onto the adenine at position 37 in tRNAs that read codons beginning with uridine, leading to the formation of N6-(dimethylallyl)adenosine (i(6)A).</text>
</comment>
<comment type="catalytic activity">
    <reaction evidence="1">
        <text>adenosine(37) in tRNA + dimethylallyl diphosphate = N(6)-dimethylallyladenosine(37) in tRNA + diphosphate</text>
        <dbReference type="Rhea" id="RHEA:26482"/>
        <dbReference type="Rhea" id="RHEA-COMP:10162"/>
        <dbReference type="Rhea" id="RHEA-COMP:10375"/>
        <dbReference type="ChEBI" id="CHEBI:33019"/>
        <dbReference type="ChEBI" id="CHEBI:57623"/>
        <dbReference type="ChEBI" id="CHEBI:74411"/>
        <dbReference type="ChEBI" id="CHEBI:74415"/>
        <dbReference type="EC" id="2.5.1.75"/>
    </reaction>
</comment>
<comment type="cofactor">
    <cofactor evidence="1">
        <name>Mg(2+)</name>
        <dbReference type="ChEBI" id="CHEBI:18420"/>
    </cofactor>
</comment>
<comment type="subunit">
    <text evidence="1">Monomer.</text>
</comment>
<comment type="similarity">
    <text evidence="1">Belongs to the IPP transferase family.</text>
</comment>